<organism>
    <name type="scientific">Neisseria gonorrhoeae (strain ATCC 700825 / FA 1090)</name>
    <dbReference type="NCBI Taxonomy" id="242231"/>
    <lineage>
        <taxon>Bacteria</taxon>
        <taxon>Pseudomonadati</taxon>
        <taxon>Pseudomonadota</taxon>
        <taxon>Betaproteobacteria</taxon>
        <taxon>Neisseriales</taxon>
        <taxon>Neisseriaceae</taxon>
        <taxon>Neisseria</taxon>
    </lineage>
</organism>
<evidence type="ECO:0000255" key="1">
    <source>
        <dbReference type="HAMAP-Rule" id="MF_00493"/>
    </source>
</evidence>
<evidence type="ECO:0007829" key="2">
    <source>
        <dbReference type="PDB" id="7BBX"/>
    </source>
</evidence>
<dbReference type="EC" id="2.2.1.2" evidence="1"/>
<dbReference type="EMBL" id="AE004969">
    <property type="protein sequence ID" value="AAW90238.1"/>
    <property type="molecule type" value="Genomic_DNA"/>
</dbReference>
<dbReference type="RefSeq" id="WP_003689551.1">
    <property type="nucleotide sequence ID" value="NC_002946.2"/>
</dbReference>
<dbReference type="RefSeq" id="YP_208650.1">
    <property type="nucleotide sequence ID" value="NC_002946.2"/>
</dbReference>
<dbReference type="PDB" id="3CLM">
    <property type="method" value="X-ray"/>
    <property type="resolution" value="1.14 A"/>
    <property type="chains" value="A=1-351"/>
</dbReference>
<dbReference type="PDB" id="6ZWF">
    <property type="method" value="X-ray"/>
    <property type="resolution" value="1.05 A"/>
    <property type="chains" value="A=1-351"/>
</dbReference>
<dbReference type="PDB" id="6ZWH">
    <property type="method" value="X-ray"/>
    <property type="resolution" value="1.50 A"/>
    <property type="chains" value="A=1-351"/>
</dbReference>
<dbReference type="PDB" id="6ZWJ">
    <property type="method" value="X-ray"/>
    <property type="resolution" value="1.35 A"/>
    <property type="chains" value="A=1-351"/>
</dbReference>
<dbReference type="PDB" id="6ZX4">
    <property type="method" value="X-ray"/>
    <property type="resolution" value="0.96 A"/>
    <property type="chains" value="A=1-351"/>
</dbReference>
<dbReference type="PDB" id="7B0L">
    <property type="method" value="X-ray"/>
    <property type="resolution" value="1.65 A"/>
    <property type="chains" value="A=1-351"/>
</dbReference>
<dbReference type="PDB" id="7BBW">
    <property type="method" value="X-ray"/>
    <property type="resolution" value="1.25 A"/>
    <property type="chains" value="A/B=2-351"/>
</dbReference>
<dbReference type="PDB" id="7BBX">
    <property type="method" value="X-ray"/>
    <property type="resolution" value="0.85 A"/>
    <property type="chains" value="A=1-351"/>
</dbReference>
<dbReference type="PDB" id="7ODO">
    <property type="method" value="X-ray"/>
    <property type="resolution" value="1.40 A"/>
    <property type="chains" value="A=1-351"/>
</dbReference>
<dbReference type="PDB" id="7ODP">
    <property type="method" value="X-ray"/>
    <property type="resolution" value="1.40 A"/>
    <property type="chains" value="A=1-351"/>
</dbReference>
<dbReference type="PDB" id="7ODQ">
    <property type="method" value="X-ray"/>
    <property type="resolution" value="1.40 A"/>
    <property type="chains" value="A=1-351"/>
</dbReference>
<dbReference type="PDB" id="7OEY">
    <property type="method" value="X-ray"/>
    <property type="resolution" value="1.35 A"/>
    <property type="chains" value="A/B=1-351"/>
</dbReference>
<dbReference type="PDBsum" id="3CLM"/>
<dbReference type="PDBsum" id="6ZWF"/>
<dbReference type="PDBsum" id="6ZWH"/>
<dbReference type="PDBsum" id="6ZWJ"/>
<dbReference type="PDBsum" id="6ZX4"/>
<dbReference type="PDBsum" id="7B0L"/>
<dbReference type="PDBsum" id="7BBW"/>
<dbReference type="PDBsum" id="7BBX"/>
<dbReference type="PDBsum" id="7ODO"/>
<dbReference type="PDBsum" id="7ODP"/>
<dbReference type="PDBsum" id="7ODQ"/>
<dbReference type="PDBsum" id="7OEY"/>
<dbReference type="SMR" id="Q5F6E9"/>
<dbReference type="STRING" id="242231.NGO_1610"/>
<dbReference type="GeneID" id="66753819"/>
<dbReference type="KEGG" id="ngo:NGO_1610"/>
<dbReference type="PATRIC" id="fig|242231.10.peg.1924"/>
<dbReference type="HOGENOM" id="CLU_050771_1_0_4"/>
<dbReference type="UniPathway" id="UPA00115">
    <property type="reaction ID" value="UER00414"/>
</dbReference>
<dbReference type="EvolutionaryTrace" id="Q5F6E9"/>
<dbReference type="Proteomes" id="UP000000535">
    <property type="component" value="Chromosome"/>
</dbReference>
<dbReference type="GO" id="GO:0005737">
    <property type="term" value="C:cytoplasm"/>
    <property type="evidence" value="ECO:0007669"/>
    <property type="project" value="UniProtKB-SubCell"/>
</dbReference>
<dbReference type="GO" id="GO:0004801">
    <property type="term" value="F:transaldolase activity"/>
    <property type="evidence" value="ECO:0007669"/>
    <property type="project" value="UniProtKB-UniRule"/>
</dbReference>
<dbReference type="GO" id="GO:0005975">
    <property type="term" value="P:carbohydrate metabolic process"/>
    <property type="evidence" value="ECO:0007669"/>
    <property type="project" value="InterPro"/>
</dbReference>
<dbReference type="GO" id="GO:0006098">
    <property type="term" value="P:pentose-phosphate shunt"/>
    <property type="evidence" value="ECO:0007669"/>
    <property type="project" value="UniProtKB-UniRule"/>
</dbReference>
<dbReference type="CDD" id="cd00955">
    <property type="entry name" value="Transaldolase_like"/>
    <property type="match status" value="1"/>
</dbReference>
<dbReference type="Gene3D" id="3.20.20.70">
    <property type="entry name" value="Aldolase class I"/>
    <property type="match status" value="1"/>
</dbReference>
<dbReference type="HAMAP" id="MF_00493">
    <property type="entry name" value="Transaldolase_2"/>
    <property type="match status" value="1"/>
</dbReference>
<dbReference type="InterPro" id="IPR013785">
    <property type="entry name" value="Aldolase_TIM"/>
</dbReference>
<dbReference type="InterPro" id="IPR001585">
    <property type="entry name" value="TAL/FSA"/>
</dbReference>
<dbReference type="InterPro" id="IPR004732">
    <property type="entry name" value="Transaldolase_2"/>
</dbReference>
<dbReference type="InterPro" id="IPR018225">
    <property type="entry name" value="Transaldolase_AS"/>
</dbReference>
<dbReference type="NCBIfam" id="NF002881">
    <property type="entry name" value="PRK03343.1"/>
    <property type="match status" value="1"/>
</dbReference>
<dbReference type="NCBIfam" id="TIGR00876">
    <property type="entry name" value="tal_mycobact"/>
    <property type="match status" value="1"/>
</dbReference>
<dbReference type="PANTHER" id="PTHR10683">
    <property type="entry name" value="TRANSALDOLASE"/>
    <property type="match status" value="1"/>
</dbReference>
<dbReference type="PANTHER" id="PTHR10683:SF31">
    <property type="entry name" value="TRANSALDOLASE"/>
    <property type="match status" value="1"/>
</dbReference>
<dbReference type="Pfam" id="PF00923">
    <property type="entry name" value="TAL_FSA"/>
    <property type="match status" value="1"/>
</dbReference>
<dbReference type="PIRSF" id="PIRSF036915">
    <property type="entry name" value="Trnald_Bac_Plnt"/>
    <property type="match status" value="1"/>
</dbReference>
<dbReference type="SUPFAM" id="SSF51569">
    <property type="entry name" value="Aldolase"/>
    <property type="match status" value="1"/>
</dbReference>
<dbReference type="PROSITE" id="PS01054">
    <property type="entry name" value="TRANSALDOLASE_1"/>
    <property type="match status" value="1"/>
</dbReference>
<dbReference type="PROSITE" id="PS00958">
    <property type="entry name" value="TRANSALDOLASE_2"/>
    <property type="match status" value="1"/>
</dbReference>
<reference key="1">
    <citation type="submission" date="2003-03" db="EMBL/GenBank/DDBJ databases">
        <title>The complete genome sequence of Neisseria gonorrhoeae.</title>
        <authorList>
            <person name="Lewis L.A."/>
            <person name="Gillaspy A.F."/>
            <person name="McLaughlin R.E."/>
            <person name="Gipson M."/>
            <person name="Ducey T.F."/>
            <person name="Ownbey T."/>
            <person name="Hartman K."/>
            <person name="Nydick C."/>
            <person name="Carson M.B."/>
            <person name="Vaughn J."/>
            <person name="Thomson C."/>
            <person name="Song L."/>
            <person name="Lin S."/>
            <person name="Yuan X."/>
            <person name="Najar F."/>
            <person name="Zhan M."/>
            <person name="Ren Q."/>
            <person name="Zhu H."/>
            <person name="Qi S."/>
            <person name="Kenton S.M."/>
            <person name="Lai H."/>
            <person name="White J.D."/>
            <person name="Clifton S."/>
            <person name="Roe B.A."/>
            <person name="Dyer D.W."/>
        </authorList>
    </citation>
    <scope>NUCLEOTIDE SEQUENCE [LARGE SCALE GENOMIC DNA]</scope>
    <source>
        <strain>ATCC 700825 / FA 1090</strain>
    </source>
</reference>
<gene>
    <name evidence="1" type="primary">tal</name>
    <name type="ordered locus">NGO_1610</name>
</gene>
<feature type="chain" id="PRO_1000026529" description="Transaldolase">
    <location>
        <begin position="1"/>
        <end position="351"/>
    </location>
</feature>
<feature type="active site" description="Schiff-base intermediate with substrate" evidence="1">
    <location>
        <position position="138"/>
    </location>
</feature>
<feature type="helix" evidence="2">
    <location>
        <begin position="3"/>
        <end position="9"/>
    </location>
</feature>
<feature type="strand" evidence="2">
    <location>
        <begin position="12"/>
        <end position="17"/>
    </location>
</feature>
<feature type="helix" evidence="2">
    <location>
        <begin position="21"/>
        <end position="25"/>
    </location>
</feature>
<feature type="helix" evidence="2">
    <location>
        <begin position="28"/>
        <end position="33"/>
    </location>
</feature>
<feature type="turn" evidence="2">
    <location>
        <begin position="34"/>
        <end position="36"/>
    </location>
</feature>
<feature type="strand" evidence="2">
    <location>
        <begin position="39"/>
        <end position="41"/>
    </location>
</feature>
<feature type="helix" evidence="2">
    <location>
        <begin position="44"/>
        <end position="53"/>
    </location>
</feature>
<feature type="helix" evidence="2">
    <location>
        <begin position="57"/>
        <end position="64"/>
    </location>
</feature>
<feature type="helix" evidence="2">
    <location>
        <begin position="71"/>
        <end position="96"/>
    </location>
</feature>
<feature type="strand" evidence="2">
    <location>
        <begin position="99"/>
        <end position="101"/>
    </location>
</feature>
<feature type="strand" evidence="2">
    <location>
        <begin position="103"/>
        <end position="107"/>
    </location>
</feature>
<feature type="helix" evidence="2">
    <location>
        <begin position="110"/>
        <end position="112"/>
    </location>
</feature>
<feature type="helix" evidence="2">
    <location>
        <begin position="116"/>
        <end position="130"/>
    </location>
</feature>
<feature type="strand" evidence="2">
    <location>
        <begin position="135"/>
        <end position="140"/>
    </location>
</feature>
<feature type="helix" evidence="2">
    <location>
        <begin position="143"/>
        <end position="154"/>
    </location>
</feature>
<feature type="strand" evidence="2">
    <location>
        <begin position="159"/>
        <end position="164"/>
    </location>
</feature>
<feature type="helix" evidence="2">
    <location>
        <begin position="167"/>
        <end position="186"/>
    </location>
</feature>
<feature type="strand" evidence="2">
    <location>
        <begin position="196"/>
        <end position="201"/>
    </location>
</feature>
<feature type="helix" evidence="2">
    <location>
        <begin position="203"/>
        <end position="209"/>
    </location>
</feature>
<feature type="helix" evidence="2">
    <location>
        <begin position="210"/>
        <end position="212"/>
    </location>
</feature>
<feature type="helix" evidence="2">
    <location>
        <begin position="215"/>
        <end position="217"/>
    </location>
</feature>
<feature type="turn" evidence="2">
    <location>
        <begin position="218"/>
        <end position="220"/>
    </location>
</feature>
<feature type="helix" evidence="2">
    <location>
        <begin position="221"/>
        <end position="238"/>
    </location>
</feature>
<feature type="helix" evidence="2">
    <location>
        <begin position="240"/>
        <end position="246"/>
    </location>
</feature>
<feature type="turn" evidence="2">
    <location>
        <begin position="247"/>
        <end position="249"/>
    </location>
</feature>
<feature type="strand" evidence="2">
    <location>
        <begin position="254"/>
        <end position="259"/>
    </location>
</feature>
<feature type="helix" evidence="2">
    <location>
        <begin position="271"/>
        <end position="275"/>
    </location>
</feature>
<feature type="strand" evidence="2">
    <location>
        <begin position="281"/>
        <end position="285"/>
    </location>
</feature>
<feature type="helix" evidence="2">
    <location>
        <begin position="287"/>
        <end position="296"/>
    </location>
</feature>
<feature type="turn" evidence="2">
    <location>
        <begin position="303"/>
        <end position="306"/>
    </location>
</feature>
<feature type="helix" evidence="2">
    <location>
        <begin position="307"/>
        <end position="319"/>
    </location>
</feature>
<feature type="helix" evidence="2">
    <location>
        <begin position="324"/>
        <end position="347"/>
    </location>
</feature>
<feature type="helix" evidence="2">
    <location>
        <begin position="348"/>
        <end position="350"/>
    </location>
</feature>
<protein>
    <recommendedName>
        <fullName evidence="1">Transaldolase</fullName>
        <ecNumber evidence="1">2.2.1.2</ecNumber>
    </recommendedName>
</protein>
<name>TAL_NEIG1</name>
<sequence>MTILSDVKALGQQIWLDNLSRSLVQSGELAQMLKQGVCGVTSNPAIFQKAFAGDALYADEVAALKRQNLSPKQRYETMAVADVRAACDVCLAEHESTGGKTGFVSLEVSPELAKDAQGTVEEARRLHAAIARKNAMIKVPATDAGIDALETLVSDGISVNLTLLFSRAQTLKAYAAYARGIAKRLAAGQSVAHIQVVASFFISRVDSALDATLPDRLKGKTAIALAKAAYQDWEQYFTAPEFAALEAQGANRVQLLWASTGVKNPAYPDTLYVDSLIGVHTVNTVPDATLKAFIDHGTAKATLTESADEARARLAEIAALGIDVETLAARLQEDGLKQFEEAFEKLLAPLV</sequence>
<keyword id="KW-0002">3D-structure</keyword>
<keyword id="KW-0963">Cytoplasm</keyword>
<keyword id="KW-0570">Pentose shunt</keyword>
<keyword id="KW-1185">Reference proteome</keyword>
<keyword id="KW-0704">Schiff base</keyword>
<keyword id="KW-0808">Transferase</keyword>
<accession>Q5F6E9</accession>
<proteinExistence type="evidence at protein level"/>
<comment type="function">
    <text evidence="1">Transaldolase is important for the balance of metabolites in the pentose-phosphate pathway.</text>
</comment>
<comment type="catalytic activity">
    <reaction evidence="1">
        <text>D-sedoheptulose 7-phosphate + D-glyceraldehyde 3-phosphate = D-erythrose 4-phosphate + beta-D-fructose 6-phosphate</text>
        <dbReference type="Rhea" id="RHEA:17053"/>
        <dbReference type="ChEBI" id="CHEBI:16897"/>
        <dbReference type="ChEBI" id="CHEBI:57483"/>
        <dbReference type="ChEBI" id="CHEBI:57634"/>
        <dbReference type="ChEBI" id="CHEBI:59776"/>
        <dbReference type="EC" id="2.2.1.2"/>
    </reaction>
</comment>
<comment type="pathway">
    <text evidence="1">Carbohydrate degradation; pentose phosphate pathway; D-glyceraldehyde 3-phosphate and beta-D-fructose 6-phosphate from D-ribose 5-phosphate and D-xylulose 5-phosphate (non-oxidative stage): step 2/3.</text>
</comment>
<comment type="subcellular location">
    <subcellularLocation>
        <location evidence="1">Cytoplasm</location>
    </subcellularLocation>
</comment>
<comment type="similarity">
    <text evidence="1">Belongs to the transaldolase family. Type 2 subfamily.</text>
</comment>